<reference key="1">
    <citation type="journal article" date="1988" name="DNA">
        <title>Cloning, characterization, and sequence of a porcine cDNA encoding a secreted neuronal and endocrine protein.</title>
        <authorList>
            <person name="Brayton K.A."/>
            <person name="Aimi J."/>
            <person name="Qiu H."/>
            <person name="Yazdanparast R."/>
            <person name="Ghatei M.A."/>
            <person name="Polak J.M."/>
            <person name="Bloom S.R."/>
            <person name="Dixon J.E."/>
        </authorList>
    </citation>
    <scope>NUCLEOTIDE SEQUENCE [MRNA]</scope>
</reference>
<reference key="2">
    <citation type="journal article" date="1991" name="Int. J. Pept. Protein Res.">
        <title>Processed forms of neuroendocrine proteins 7B2 and secretogranin II are found in porcine pituitary extracts.</title>
        <authorList>
            <person name="Lazure C."/>
            <person name="Benjannet S."/>
            <person name="Seidah N.G."/>
            <person name="Chretien M."/>
        </authorList>
    </citation>
    <scope>PROTEIN SEQUENCE OF 23-171</scope>
    <source>
        <tissue>Pituitary</tissue>
    </source>
</reference>
<reference key="3">
    <citation type="journal article" date="1983" name="Arch. Biochem. Biophys.">
        <title>Isolation and NH2-terminal sequence of a highly conserved human and porcine pituitary protein belonging to a new superfamily. Immunocytochemical localization in pars distalis and pars nervosa of the pituitary and in the supraoptic nucleus of the hypothalamus.</title>
        <authorList>
            <person name="Seidah N.G."/>
            <person name="Hsi K.L."/>
            <person name="de Serres G."/>
            <person name="Rochemont J."/>
            <person name="Hamelin J."/>
            <person name="Antakly T."/>
            <person name="Cantin M."/>
            <person name="Chretien M."/>
        </authorList>
    </citation>
    <scope>PROTEIN SEQUENCE OF 23-103</scope>
</reference>
<reference key="4">
    <citation type="journal article" date="1982" name="FEBS Lett.">
        <title>Isolation and NH2-terminal sequence of a novel porcine anterior pituitary polypeptide. Homology to proinsulin, secretin and Rous sarcoma virus transforming protein TVFV60.</title>
        <authorList>
            <person name="Hsi K.L."/>
            <person name="Seidah N.G."/>
            <person name="de Serres G."/>
            <person name="Chretien M."/>
        </authorList>
    </citation>
    <scope>PROTEIN SEQUENCE OF 23-72</scope>
</reference>
<reference key="5">
    <citation type="journal article" date="1984" name="Neuroendocrinology">
        <title>Tissue distribution and molecular forms of a novel pituitary protein in the rat.</title>
        <authorList>
            <person name="Iguchi H."/>
            <person name="Chan J.S."/>
            <person name="Seidah N.G."/>
            <person name="Chretien M."/>
        </authorList>
    </citation>
    <scope>SUBCELLULAR LOCATION</scope>
</reference>
<reference key="6">
    <citation type="journal article" date="2001" name="Biochem. J.">
        <title>Neuroendocrine secretory protein 7B2: structure, expression and functions.</title>
        <authorList>
            <person name="Mbikay M."/>
            <person name="Seidah N.G."/>
            <person name="Chretien M."/>
        </authorList>
    </citation>
    <scope>REVIEW</scope>
</reference>
<name>7B2_PIG</name>
<proteinExistence type="evidence at protein level"/>
<dbReference type="EMBL" id="M23654">
    <property type="protein sequence ID" value="AAA50416.1"/>
    <property type="molecule type" value="mRNA"/>
</dbReference>
<dbReference type="PIR" id="A31600">
    <property type="entry name" value="PUPG"/>
</dbReference>
<dbReference type="SMR" id="P01165"/>
<dbReference type="FunCoup" id="P01165">
    <property type="interactions" value="265"/>
</dbReference>
<dbReference type="STRING" id="9823.ENSSSCP00000005176"/>
<dbReference type="MEROPS" id="I21.001"/>
<dbReference type="PaxDb" id="9823-ENSSSCP00000005176"/>
<dbReference type="PeptideAtlas" id="P01165"/>
<dbReference type="eggNOG" id="KOG4187">
    <property type="taxonomic scope" value="Eukaryota"/>
</dbReference>
<dbReference type="InParanoid" id="P01165"/>
<dbReference type="Proteomes" id="UP000008227">
    <property type="component" value="Unplaced"/>
</dbReference>
<dbReference type="Proteomes" id="UP000314985">
    <property type="component" value="Unplaced"/>
</dbReference>
<dbReference type="Proteomes" id="UP000694570">
    <property type="component" value="Unplaced"/>
</dbReference>
<dbReference type="Proteomes" id="UP000694571">
    <property type="component" value="Unplaced"/>
</dbReference>
<dbReference type="Proteomes" id="UP000694720">
    <property type="component" value="Unplaced"/>
</dbReference>
<dbReference type="Proteomes" id="UP000694722">
    <property type="component" value="Unplaced"/>
</dbReference>
<dbReference type="Proteomes" id="UP000694723">
    <property type="component" value="Unplaced"/>
</dbReference>
<dbReference type="Proteomes" id="UP000694724">
    <property type="component" value="Unplaced"/>
</dbReference>
<dbReference type="Proteomes" id="UP000694725">
    <property type="component" value="Unplaced"/>
</dbReference>
<dbReference type="Proteomes" id="UP000694726">
    <property type="component" value="Unplaced"/>
</dbReference>
<dbReference type="Proteomes" id="UP000694727">
    <property type="component" value="Unplaced"/>
</dbReference>
<dbReference type="Proteomes" id="UP000694728">
    <property type="component" value="Unplaced"/>
</dbReference>
<dbReference type="GO" id="GO:0005576">
    <property type="term" value="C:extracellular region"/>
    <property type="evidence" value="ECO:0007669"/>
    <property type="project" value="UniProtKB-SubCell"/>
</dbReference>
<dbReference type="GO" id="GO:0030141">
    <property type="term" value="C:secretory granule"/>
    <property type="evidence" value="ECO:0000314"/>
    <property type="project" value="UniProtKB"/>
</dbReference>
<dbReference type="GO" id="GO:0004857">
    <property type="term" value="F:enzyme inhibitor activity"/>
    <property type="evidence" value="ECO:0000250"/>
    <property type="project" value="UniProtKB"/>
</dbReference>
<dbReference type="GO" id="GO:0030234">
    <property type="term" value="F:enzyme regulator activity"/>
    <property type="evidence" value="ECO:0000318"/>
    <property type="project" value="GO_Central"/>
</dbReference>
<dbReference type="GO" id="GO:0051082">
    <property type="term" value="F:unfolded protein binding"/>
    <property type="evidence" value="ECO:0000250"/>
    <property type="project" value="UniProtKB"/>
</dbReference>
<dbReference type="GO" id="GO:0006886">
    <property type="term" value="P:intracellular protein transport"/>
    <property type="evidence" value="ECO:0000250"/>
    <property type="project" value="UniProtKB"/>
</dbReference>
<dbReference type="GO" id="GO:0007218">
    <property type="term" value="P:neuropeptide signaling pathway"/>
    <property type="evidence" value="ECO:0007669"/>
    <property type="project" value="UniProtKB-KW"/>
</dbReference>
<dbReference type="GO" id="GO:0016486">
    <property type="term" value="P:peptide hormone processing"/>
    <property type="evidence" value="ECO:0000250"/>
    <property type="project" value="UniProtKB"/>
</dbReference>
<dbReference type="GO" id="GO:0046883">
    <property type="term" value="P:regulation of hormone secretion"/>
    <property type="evidence" value="ECO:0000250"/>
    <property type="project" value="UniProtKB"/>
</dbReference>
<dbReference type="InterPro" id="IPR007945">
    <property type="entry name" value="Secretogranin_V"/>
</dbReference>
<dbReference type="PANTHER" id="PTHR12738">
    <property type="entry name" value="NEUROENDOCRINE PROTEIN 7B2"/>
    <property type="match status" value="1"/>
</dbReference>
<dbReference type="PANTHER" id="PTHR12738:SF0">
    <property type="entry name" value="NEUROENDOCRINE PROTEIN 7B2"/>
    <property type="match status" value="1"/>
</dbReference>
<dbReference type="Pfam" id="PF05281">
    <property type="entry name" value="Secretogranin_V"/>
    <property type="match status" value="1"/>
</dbReference>
<evidence type="ECO:0000250" key="1">
    <source>
        <dbReference type="UniProtKB" id="P05408"/>
    </source>
</evidence>
<evidence type="ECO:0000250" key="2">
    <source>
        <dbReference type="UniProtKB" id="P12961"/>
    </source>
</evidence>
<evidence type="ECO:0000250" key="3">
    <source>
        <dbReference type="UniProtKB" id="P18844"/>
    </source>
</evidence>
<evidence type="ECO:0000256" key="4">
    <source>
        <dbReference type="SAM" id="MobiDB-lite"/>
    </source>
</evidence>
<evidence type="ECO:0000269" key="5">
    <source>
    </source>
</evidence>
<evidence type="ECO:0000269" key="6">
    <source>
    </source>
</evidence>
<evidence type="ECO:0000269" key="7">
    <source>
    </source>
</evidence>
<evidence type="ECO:0000269" key="8">
    <source>
    </source>
</evidence>
<evidence type="ECO:0000305" key="9"/>
<keyword id="KW-0143">Chaperone</keyword>
<keyword id="KW-0165">Cleavage on pair of basic residues</keyword>
<keyword id="KW-0903">Direct protein sequencing</keyword>
<keyword id="KW-1015">Disulfide bond</keyword>
<keyword id="KW-0527">Neuropeptide</keyword>
<keyword id="KW-0597">Phosphoprotein</keyword>
<keyword id="KW-1185">Reference proteome</keyword>
<keyword id="KW-0964">Secreted</keyword>
<keyword id="KW-0732">Signal</keyword>
<keyword id="KW-0765">Sulfation</keyword>
<keyword id="KW-0813">Transport</keyword>
<sequence>MVSTMLSGLVLWLTFGWTPALAYSPRTPDRVSETDIQRLLHGVMEQLGIARPRVEYPAHQAMNLVGPQSIEGGAHEGLQHLGPFGNIPNIVAELTGDNTPKDFSEDQGYPDPPNPCPIGKTDDGCLENTPDTAEFSREFQLHQHLFDPEHDYPGLGKWNKKLLYEKMKGGQRRKRRSVNPYLQGQRLDNVVAKKSVPHFSDEDKDPE</sequence>
<feature type="signal peptide" evidence="5 7 8">
    <location>
        <begin position="1"/>
        <end position="22"/>
    </location>
</feature>
<feature type="chain" id="PRO_0000000047" description="Neuroendocrine protein 7B2">
    <location>
        <begin position="23"/>
        <end position="207"/>
    </location>
</feature>
<feature type="chain" id="PRO_0000000048" description="N-terminal peptide" evidence="5">
    <location>
        <begin position="23"/>
        <end position="171"/>
    </location>
</feature>
<feature type="peptide" id="PRO_0000000049" description="C-terminal peptide" evidence="3">
    <location>
        <begin position="195"/>
        <end position="207"/>
    </location>
</feature>
<feature type="region of interest" description="Disordered" evidence="4">
    <location>
        <begin position="168"/>
        <end position="207"/>
    </location>
</feature>
<feature type="modified residue" description="Phosphoserine" evidence="2">
    <location>
        <position position="136"/>
    </location>
</feature>
<feature type="modified residue" description="Phosphoserine" evidence="2">
    <location>
        <position position="200"/>
    </location>
</feature>
<feature type="disulfide bond" evidence="3">
    <location>
        <begin position="116"/>
        <end position="125"/>
    </location>
</feature>
<accession>P01165</accession>
<gene>
    <name type="primary">SCG5</name>
    <name type="synonym">SGNE1</name>
</gene>
<organism>
    <name type="scientific">Sus scrofa</name>
    <name type="common">Pig</name>
    <dbReference type="NCBI Taxonomy" id="9823"/>
    <lineage>
        <taxon>Eukaryota</taxon>
        <taxon>Metazoa</taxon>
        <taxon>Chordata</taxon>
        <taxon>Craniata</taxon>
        <taxon>Vertebrata</taxon>
        <taxon>Euteleostomi</taxon>
        <taxon>Mammalia</taxon>
        <taxon>Eutheria</taxon>
        <taxon>Laurasiatheria</taxon>
        <taxon>Artiodactyla</taxon>
        <taxon>Suina</taxon>
        <taxon>Suidae</taxon>
        <taxon>Sus</taxon>
    </lineage>
</organism>
<comment type="function">
    <text>Acts as a molecular chaperone for PCSK2/PC2, preventing its premature activation in the regulated secretory pathway. Binds to inactive PCSK2 in the endoplasmic reticulum and facilitates its transport from there to later compartments of the secretory pathway where it is proteolytically matured and activated. Also required for cleavage of PCSK2 but does not appear to be involved in its folding. Plays a role in regulating pituitary hormone secretion. The C-terminal peptide inhibits PCSK2 in vitro.</text>
</comment>
<comment type="subunit">
    <text evidence="1">Interacts with PCSK2/PC2 early in the secretory pathway. Dissociation occurs at later stages.</text>
</comment>
<comment type="subcellular location">
    <subcellularLocation>
        <location evidence="6">Secreted</location>
    </subcellularLocation>
    <text evidence="6">Neuroendocrine and endocrine secretory granules.</text>
</comment>
<comment type="PTM">
    <text evidence="2">Proteolytically cleaved in the Golgi by a furin-like convertase to generate bioactive peptides.</text>
</comment>
<comment type="PTM">
    <text evidence="2">Sulfated on tyrosine residues.</text>
</comment>
<comment type="similarity">
    <text evidence="9">Belongs to the 7B2 family.</text>
</comment>
<protein>
    <recommendedName>
        <fullName>Neuroendocrine protein 7B2</fullName>
    </recommendedName>
    <alternativeName>
        <fullName>Secretogranin V</fullName>
    </alternativeName>
    <alternativeName>
        <fullName>Secretogranin-5</fullName>
    </alternativeName>
    <alternativeName>
        <fullName>Secretory granule endocrine protein I</fullName>
    </alternativeName>
    <component>
        <recommendedName>
            <fullName>N-terminal peptide</fullName>
        </recommendedName>
    </component>
    <component>
        <recommendedName>
            <fullName>C-terminal peptide</fullName>
        </recommendedName>
    </component>
</protein>